<dbReference type="EC" id="5.4.2.10" evidence="1"/>
<dbReference type="EMBL" id="CP000922">
    <property type="protein sequence ID" value="ACJ32535.1"/>
    <property type="molecule type" value="Genomic_DNA"/>
</dbReference>
<dbReference type="RefSeq" id="WP_012573880.1">
    <property type="nucleotide sequence ID" value="NC_011567.1"/>
</dbReference>
<dbReference type="SMR" id="B7GIY9"/>
<dbReference type="STRING" id="491915.Aflv_0151"/>
<dbReference type="GeneID" id="7036363"/>
<dbReference type="KEGG" id="afl:Aflv_0151"/>
<dbReference type="PATRIC" id="fig|491915.6.peg.152"/>
<dbReference type="eggNOG" id="COG1109">
    <property type="taxonomic scope" value="Bacteria"/>
</dbReference>
<dbReference type="HOGENOM" id="CLU_016950_7_0_9"/>
<dbReference type="Proteomes" id="UP000000742">
    <property type="component" value="Chromosome"/>
</dbReference>
<dbReference type="GO" id="GO:0005829">
    <property type="term" value="C:cytosol"/>
    <property type="evidence" value="ECO:0007669"/>
    <property type="project" value="TreeGrafter"/>
</dbReference>
<dbReference type="GO" id="GO:0000287">
    <property type="term" value="F:magnesium ion binding"/>
    <property type="evidence" value="ECO:0007669"/>
    <property type="project" value="UniProtKB-UniRule"/>
</dbReference>
<dbReference type="GO" id="GO:0008966">
    <property type="term" value="F:phosphoglucosamine mutase activity"/>
    <property type="evidence" value="ECO:0007669"/>
    <property type="project" value="UniProtKB-UniRule"/>
</dbReference>
<dbReference type="GO" id="GO:0004615">
    <property type="term" value="F:phosphomannomutase activity"/>
    <property type="evidence" value="ECO:0007669"/>
    <property type="project" value="TreeGrafter"/>
</dbReference>
<dbReference type="GO" id="GO:0005975">
    <property type="term" value="P:carbohydrate metabolic process"/>
    <property type="evidence" value="ECO:0007669"/>
    <property type="project" value="InterPro"/>
</dbReference>
<dbReference type="GO" id="GO:0009252">
    <property type="term" value="P:peptidoglycan biosynthetic process"/>
    <property type="evidence" value="ECO:0007669"/>
    <property type="project" value="TreeGrafter"/>
</dbReference>
<dbReference type="GO" id="GO:0006048">
    <property type="term" value="P:UDP-N-acetylglucosamine biosynthetic process"/>
    <property type="evidence" value="ECO:0007669"/>
    <property type="project" value="TreeGrafter"/>
</dbReference>
<dbReference type="CDD" id="cd05802">
    <property type="entry name" value="GlmM"/>
    <property type="match status" value="1"/>
</dbReference>
<dbReference type="FunFam" id="3.30.310.50:FF:000001">
    <property type="entry name" value="Phosphoglucosamine mutase"/>
    <property type="match status" value="1"/>
</dbReference>
<dbReference type="FunFam" id="3.40.120.10:FF:000001">
    <property type="entry name" value="Phosphoglucosamine mutase"/>
    <property type="match status" value="1"/>
</dbReference>
<dbReference type="FunFam" id="3.40.120.10:FF:000002">
    <property type="entry name" value="Phosphoglucosamine mutase"/>
    <property type="match status" value="1"/>
</dbReference>
<dbReference type="Gene3D" id="3.40.120.10">
    <property type="entry name" value="Alpha-D-Glucose-1,6-Bisphosphate, subunit A, domain 3"/>
    <property type="match status" value="3"/>
</dbReference>
<dbReference type="Gene3D" id="3.30.310.50">
    <property type="entry name" value="Alpha-D-phosphohexomutase, C-terminal domain"/>
    <property type="match status" value="1"/>
</dbReference>
<dbReference type="HAMAP" id="MF_01554_B">
    <property type="entry name" value="GlmM_B"/>
    <property type="match status" value="1"/>
</dbReference>
<dbReference type="InterPro" id="IPR005844">
    <property type="entry name" value="A-D-PHexomutase_a/b/a-I"/>
</dbReference>
<dbReference type="InterPro" id="IPR016055">
    <property type="entry name" value="A-D-PHexomutase_a/b/a-I/II/III"/>
</dbReference>
<dbReference type="InterPro" id="IPR005845">
    <property type="entry name" value="A-D-PHexomutase_a/b/a-II"/>
</dbReference>
<dbReference type="InterPro" id="IPR005846">
    <property type="entry name" value="A-D-PHexomutase_a/b/a-III"/>
</dbReference>
<dbReference type="InterPro" id="IPR005843">
    <property type="entry name" value="A-D-PHexomutase_C"/>
</dbReference>
<dbReference type="InterPro" id="IPR036900">
    <property type="entry name" value="A-D-PHexomutase_C_sf"/>
</dbReference>
<dbReference type="InterPro" id="IPR016066">
    <property type="entry name" value="A-D-PHexomutase_CS"/>
</dbReference>
<dbReference type="InterPro" id="IPR005841">
    <property type="entry name" value="Alpha-D-phosphohexomutase_SF"/>
</dbReference>
<dbReference type="InterPro" id="IPR006352">
    <property type="entry name" value="GlmM_bact"/>
</dbReference>
<dbReference type="InterPro" id="IPR050060">
    <property type="entry name" value="Phosphoglucosamine_mutase"/>
</dbReference>
<dbReference type="NCBIfam" id="TIGR01455">
    <property type="entry name" value="glmM"/>
    <property type="match status" value="1"/>
</dbReference>
<dbReference type="NCBIfam" id="NF008139">
    <property type="entry name" value="PRK10887.1"/>
    <property type="match status" value="1"/>
</dbReference>
<dbReference type="PANTHER" id="PTHR42946:SF1">
    <property type="entry name" value="PHOSPHOGLUCOMUTASE (ALPHA-D-GLUCOSE-1,6-BISPHOSPHATE-DEPENDENT)"/>
    <property type="match status" value="1"/>
</dbReference>
<dbReference type="PANTHER" id="PTHR42946">
    <property type="entry name" value="PHOSPHOHEXOSE MUTASE"/>
    <property type="match status" value="1"/>
</dbReference>
<dbReference type="Pfam" id="PF02878">
    <property type="entry name" value="PGM_PMM_I"/>
    <property type="match status" value="1"/>
</dbReference>
<dbReference type="Pfam" id="PF02879">
    <property type="entry name" value="PGM_PMM_II"/>
    <property type="match status" value="1"/>
</dbReference>
<dbReference type="Pfam" id="PF02880">
    <property type="entry name" value="PGM_PMM_III"/>
    <property type="match status" value="1"/>
</dbReference>
<dbReference type="Pfam" id="PF00408">
    <property type="entry name" value="PGM_PMM_IV"/>
    <property type="match status" value="1"/>
</dbReference>
<dbReference type="PRINTS" id="PR00509">
    <property type="entry name" value="PGMPMM"/>
</dbReference>
<dbReference type="SUPFAM" id="SSF55957">
    <property type="entry name" value="Phosphoglucomutase, C-terminal domain"/>
    <property type="match status" value="1"/>
</dbReference>
<dbReference type="SUPFAM" id="SSF53738">
    <property type="entry name" value="Phosphoglucomutase, first 3 domains"/>
    <property type="match status" value="3"/>
</dbReference>
<dbReference type="PROSITE" id="PS00710">
    <property type="entry name" value="PGM_PMM"/>
    <property type="match status" value="1"/>
</dbReference>
<comment type="function">
    <text evidence="1">Catalyzes the conversion of glucosamine-6-phosphate to glucosamine-1-phosphate.</text>
</comment>
<comment type="catalytic activity">
    <reaction evidence="1">
        <text>alpha-D-glucosamine 1-phosphate = D-glucosamine 6-phosphate</text>
        <dbReference type="Rhea" id="RHEA:23424"/>
        <dbReference type="ChEBI" id="CHEBI:58516"/>
        <dbReference type="ChEBI" id="CHEBI:58725"/>
        <dbReference type="EC" id="5.4.2.10"/>
    </reaction>
</comment>
<comment type="cofactor">
    <cofactor evidence="1">
        <name>Mg(2+)</name>
        <dbReference type="ChEBI" id="CHEBI:18420"/>
    </cofactor>
    <text evidence="1">Binds 1 Mg(2+) ion per subunit.</text>
</comment>
<comment type="PTM">
    <text evidence="1">Activated by phosphorylation.</text>
</comment>
<comment type="similarity">
    <text evidence="1">Belongs to the phosphohexose mutase family.</text>
</comment>
<sequence>MGKYFGTDGVRGIANSELTPELAFKIGRFGGYVLTKDKERPKVLIGRDTRISGHMLEGALVAGLLSIGAEVMRLGVISTPGVAYLTKALGAQAGVMISASHNPVQDNGIKFFGPDGFKLSDEQELEIEALLDSEQDTLPRPIGKDLGQVNDYFEGGQKYLQYLKQTVDEDFSGIHVALDCAHGATSALATHLFADLDADVSTMGASPNGLNINDGVGSTHPEALAAFVKEKGADVGLAFDGDGDRLIAVDENGQIVDGDQIMYICAKYLNEQGRLKHQTVVSTVMSNLGFYKALEAQGIKSVQTAVGDRYVVEEMKKNGYNLGGEQSGHIIFLDYNTTGDGLLTALQLVNIMKVTKKPLSELAGEMKKYPQKLVNVKVTDKQEAIANEEVQRVIREVEEEMAGNGRILVRPSGTEPLVRVMAEAPTNELCDQYVERIAAVIRERFGA</sequence>
<reference key="1">
    <citation type="journal article" date="2008" name="Genome Biol.">
        <title>Encapsulated in silica: genome, proteome and physiology of the thermophilic bacterium Anoxybacillus flavithermus WK1.</title>
        <authorList>
            <person name="Saw J.H."/>
            <person name="Mountain B.W."/>
            <person name="Feng L."/>
            <person name="Omelchenko M.V."/>
            <person name="Hou S."/>
            <person name="Saito J.A."/>
            <person name="Stott M.B."/>
            <person name="Li D."/>
            <person name="Zhao G."/>
            <person name="Wu J."/>
            <person name="Galperin M.Y."/>
            <person name="Koonin E.V."/>
            <person name="Makarova K.S."/>
            <person name="Wolf Y.I."/>
            <person name="Rigden D.J."/>
            <person name="Dunfield P.F."/>
            <person name="Wang L."/>
            <person name="Alam M."/>
        </authorList>
    </citation>
    <scope>NUCLEOTIDE SEQUENCE [LARGE SCALE GENOMIC DNA]</scope>
    <source>
        <strain>DSM 21510 / WK1</strain>
    </source>
</reference>
<keyword id="KW-0413">Isomerase</keyword>
<keyword id="KW-0460">Magnesium</keyword>
<keyword id="KW-0479">Metal-binding</keyword>
<keyword id="KW-0597">Phosphoprotein</keyword>
<proteinExistence type="inferred from homology"/>
<gene>
    <name evidence="1" type="primary">glmM</name>
    <name type="ordered locus">Aflv_0151</name>
</gene>
<feature type="chain" id="PRO_1000201057" description="Phosphoglucosamine mutase">
    <location>
        <begin position="1"/>
        <end position="447"/>
    </location>
</feature>
<feature type="active site" description="Phosphoserine intermediate" evidence="1">
    <location>
        <position position="100"/>
    </location>
</feature>
<feature type="binding site" description="via phosphate group" evidence="1">
    <location>
        <position position="100"/>
    </location>
    <ligand>
        <name>Mg(2+)</name>
        <dbReference type="ChEBI" id="CHEBI:18420"/>
    </ligand>
</feature>
<feature type="binding site" evidence="1">
    <location>
        <position position="240"/>
    </location>
    <ligand>
        <name>Mg(2+)</name>
        <dbReference type="ChEBI" id="CHEBI:18420"/>
    </ligand>
</feature>
<feature type="binding site" evidence="1">
    <location>
        <position position="242"/>
    </location>
    <ligand>
        <name>Mg(2+)</name>
        <dbReference type="ChEBI" id="CHEBI:18420"/>
    </ligand>
</feature>
<feature type="binding site" evidence="1">
    <location>
        <position position="244"/>
    </location>
    <ligand>
        <name>Mg(2+)</name>
        <dbReference type="ChEBI" id="CHEBI:18420"/>
    </ligand>
</feature>
<feature type="modified residue" description="Phosphoserine" evidence="1">
    <location>
        <position position="100"/>
    </location>
</feature>
<accession>B7GIY9</accession>
<organism>
    <name type="scientific">Anoxybacillus flavithermus (strain DSM 21510 / WK1)</name>
    <dbReference type="NCBI Taxonomy" id="491915"/>
    <lineage>
        <taxon>Bacteria</taxon>
        <taxon>Bacillati</taxon>
        <taxon>Bacillota</taxon>
        <taxon>Bacilli</taxon>
        <taxon>Bacillales</taxon>
        <taxon>Anoxybacillaceae</taxon>
        <taxon>Anoxybacillus</taxon>
    </lineage>
</organism>
<protein>
    <recommendedName>
        <fullName evidence="1">Phosphoglucosamine mutase</fullName>
        <ecNumber evidence="1">5.4.2.10</ecNumber>
    </recommendedName>
</protein>
<evidence type="ECO:0000255" key="1">
    <source>
        <dbReference type="HAMAP-Rule" id="MF_01554"/>
    </source>
</evidence>
<name>GLMM_ANOFW</name>